<keyword id="KW-0963">Cytoplasm</keyword>
<keyword id="KW-0489">Methyltransferase</keyword>
<keyword id="KW-0694">RNA-binding</keyword>
<keyword id="KW-0698">rRNA processing</keyword>
<keyword id="KW-0949">S-adenosyl-L-methionine</keyword>
<keyword id="KW-0808">Transferase</keyword>
<gene>
    <name evidence="1" type="primary">rsmA</name>
    <name evidence="1" type="synonym">ksgA</name>
    <name type="ordered locus">UPA3_0641</name>
</gene>
<organism>
    <name type="scientific">Ureaplasma parvum serovar 3 (strain ATCC 27815 / 27 / NCTC 11736)</name>
    <dbReference type="NCBI Taxonomy" id="505682"/>
    <lineage>
        <taxon>Bacteria</taxon>
        <taxon>Bacillati</taxon>
        <taxon>Mycoplasmatota</taxon>
        <taxon>Mycoplasmoidales</taxon>
        <taxon>Mycoplasmoidaceae</taxon>
        <taxon>Ureaplasma</taxon>
    </lineage>
</organism>
<sequence length="277" mass="32145">MNKSFIKNKLKQESFVPSKKMGQNFLLSNNIKNKIVDVANINKDDLILEIGPGWGAITEILVQKTNILIAIELDKRLYAHLKTYIKTSNFHIINNDVLCVDLDNLILDYNNTQKIQKIKVVANLPYAISSKIVLKIIQSKLINDAYIMVQKEMAERIGAKVNTRGYNAFTVLVQLFCKTKILFEVNAKEFHPQPKVQSAVIHLENLHNSVNFNIEELGKFLRICFLNKRKKLKNNLSNIYDIKIINQMFIDYNLDMNLRAENIEPKMFLKLFNYLNR</sequence>
<dbReference type="EC" id="2.1.1.182" evidence="1"/>
<dbReference type="EMBL" id="CP000942">
    <property type="protein sequence ID" value="ACA33268.1"/>
    <property type="molecule type" value="Genomic_DNA"/>
</dbReference>
<dbReference type="RefSeq" id="WP_006688630.1">
    <property type="nucleotide sequence ID" value="NC_010503.1"/>
</dbReference>
<dbReference type="SMR" id="B1AJP2"/>
<dbReference type="GeneID" id="29672343"/>
<dbReference type="KEGG" id="upa:UPA3_0641"/>
<dbReference type="HOGENOM" id="CLU_041220_0_0_14"/>
<dbReference type="Proteomes" id="UP000002162">
    <property type="component" value="Chromosome"/>
</dbReference>
<dbReference type="GO" id="GO:0005829">
    <property type="term" value="C:cytosol"/>
    <property type="evidence" value="ECO:0007669"/>
    <property type="project" value="TreeGrafter"/>
</dbReference>
<dbReference type="GO" id="GO:0052908">
    <property type="term" value="F:16S rRNA (adenine(1518)-N(6)/adenine(1519)-N(6))-dimethyltransferase activity"/>
    <property type="evidence" value="ECO:0007669"/>
    <property type="project" value="UniProtKB-EC"/>
</dbReference>
<dbReference type="GO" id="GO:0003723">
    <property type="term" value="F:RNA binding"/>
    <property type="evidence" value="ECO:0007669"/>
    <property type="project" value="UniProtKB-KW"/>
</dbReference>
<dbReference type="Gene3D" id="1.10.8.100">
    <property type="entry name" value="Ribosomal RNA adenine dimethylase-like, domain 2"/>
    <property type="match status" value="1"/>
</dbReference>
<dbReference type="Gene3D" id="3.40.50.150">
    <property type="entry name" value="Vaccinia Virus protein VP39"/>
    <property type="match status" value="1"/>
</dbReference>
<dbReference type="HAMAP" id="MF_00607">
    <property type="entry name" value="16SrRNA_methyltr_A"/>
    <property type="match status" value="1"/>
</dbReference>
<dbReference type="InterPro" id="IPR001737">
    <property type="entry name" value="KsgA/Erm"/>
</dbReference>
<dbReference type="InterPro" id="IPR023165">
    <property type="entry name" value="rRNA_Ade_diMease-like_C"/>
</dbReference>
<dbReference type="InterPro" id="IPR020596">
    <property type="entry name" value="rRNA_Ade_Mease_Trfase_CS"/>
</dbReference>
<dbReference type="InterPro" id="IPR020598">
    <property type="entry name" value="rRNA_Ade_methylase_Trfase_N"/>
</dbReference>
<dbReference type="InterPro" id="IPR011530">
    <property type="entry name" value="rRNA_adenine_dimethylase"/>
</dbReference>
<dbReference type="InterPro" id="IPR029063">
    <property type="entry name" value="SAM-dependent_MTases_sf"/>
</dbReference>
<dbReference type="NCBIfam" id="TIGR00755">
    <property type="entry name" value="ksgA"/>
    <property type="match status" value="1"/>
</dbReference>
<dbReference type="PANTHER" id="PTHR11727">
    <property type="entry name" value="DIMETHYLADENOSINE TRANSFERASE"/>
    <property type="match status" value="1"/>
</dbReference>
<dbReference type="PANTHER" id="PTHR11727:SF7">
    <property type="entry name" value="DIMETHYLADENOSINE TRANSFERASE-RELATED"/>
    <property type="match status" value="1"/>
</dbReference>
<dbReference type="Pfam" id="PF00398">
    <property type="entry name" value="RrnaAD"/>
    <property type="match status" value="1"/>
</dbReference>
<dbReference type="SMART" id="SM00650">
    <property type="entry name" value="rADc"/>
    <property type="match status" value="1"/>
</dbReference>
<dbReference type="SUPFAM" id="SSF53335">
    <property type="entry name" value="S-adenosyl-L-methionine-dependent methyltransferases"/>
    <property type="match status" value="1"/>
</dbReference>
<dbReference type="PROSITE" id="PS01131">
    <property type="entry name" value="RRNA_A_DIMETH"/>
    <property type="match status" value="1"/>
</dbReference>
<dbReference type="PROSITE" id="PS51689">
    <property type="entry name" value="SAM_RNA_A_N6_MT"/>
    <property type="match status" value="1"/>
</dbReference>
<protein>
    <recommendedName>
        <fullName evidence="1">Ribosomal RNA small subunit methyltransferase A</fullName>
        <ecNumber evidence="1">2.1.1.182</ecNumber>
    </recommendedName>
    <alternativeName>
        <fullName evidence="1">16S rRNA (adenine(1518)-N(6)/adenine(1519)-N(6))-dimethyltransferase</fullName>
    </alternativeName>
    <alternativeName>
        <fullName evidence="1">16S rRNA dimethyladenosine transferase</fullName>
    </alternativeName>
    <alternativeName>
        <fullName evidence="1">16S rRNA dimethylase</fullName>
    </alternativeName>
    <alternativeName>
        <fullName evidence="1">S-adenosylmethionine-6-N', N'-adenosyl(rRNA) dimethyltransferase</fullName>
    </alternativeName>
</protein>
<proteinExistence type="inferred from homology"/>
<comment type="function">
    <text evidence="1">Specifically dimethylates two adjacent adenosines (A1518 and A1519) in the loop of a conserved hairpin near the 3'-end of 16S rRNA in the 30S particle. May play a critical role in biogenesis of 30S subunits.</text>
</comment>
<comment type="catalytic activity">
    <reaction evidence="1">
        <text>adenosine(1518)/adenosine(1519) in 16S rRNA + 4 S-adenosyl-L-methionine = N(6)-dimethyladenosine(1518)/N(6)-dimethyladenosine(1519) in 16S rRNA + 4 S-adenosyl-L-homocysteine + 4 H(+)</text>
        <dbReference type="Rhea" id="RHEA:19609"/>
        <dbReference type="Rhea" id="RHEA-COMP:10232"/>
        <dbReference type="Rhea" id="RHEA-COMP:10233"/>
        <dbReference type="ChEBI" id="CHEBI:15378"/>
        <dbReference type="ChEBI" id="CHEBI:57856"/>
        <dbReference type="ChEBI" id="CHEBI:59789"/>
        <dbReference type="ChEBI" id="CHEBI:74411"/>
        <dbReference type="ChEBI" id="CHEBI:74493"/>
        <dbReference type="EC" id="2.1.1.182"/>
    </reaction>
</comment>
<comment type="subcellular location">
    <subcellularLocation>
        <location evidence="1">Cytoplasm</location>
    </subcellularLocation>
</comment>
<comment type="similarity">
    <text evidence="1">Belongs to the class I-like SAM-binding methyltransferase superfamily. rRNA adenine N(6)-methyltransferase family. RsmA subfamily.</text>
</comment>
<evidence type="ECO:0000255" key="1">
    <source>
        <dbReference type="HAMAP-Rule" id="MF_00607"/>
    </source>
</evidence>
<accession>B1AJP2</accession>
<name>RSMA_UREP2</name>
<feature type="chain" id="PRO_1000082568" description="Ribosomal RNA small subunit methyltransferase A">
    <location>
        <begin position="1"/>
        <end position="277"/>
    </location>
</feature>
<feature type="binding site" evidence="1">
    <location>
        <position position="24"/>
    </location>
    <ligand>
        <name>S-adenosyl-L-methionine</name>
        <dbReference type="ChEBI" id="CHEBI:59789"/>
    </ligand>
</feature>
<feature type="binding site" evidence="1">
    <location>
        <position position="26"/>
    </location>
    <ligand>
        <name>S-adenosyl-L-methionine</name>
        <dbReference type="ChEBI" id="CHEBI:59789"/>
    </ligand>
</feature>
<feature type="binding site" evidence="1">
    <location>
        <position position="51"/>
    </location>
    <ligand>
        <name>S-adenosyl-L-methionine</name>
        <dbReference type="ChEBI" id="CHEBI:59789"/>
    </ligand>
</feature>
<feature type="binding site" evidence="1">
    <location>
        <position position="72"/>
    </location>
    <ligand>
        <name>S-adenosyl-L-methionine</name>
        <dbReference type="ChEBI" id="CHEBI:59789"/>
    </ligand>
</feature>
<feature type="binding site" evidence="1">
    <location>
        <position position="96"/>
    </location>
    <ligand>
        <name>S-adenosyl-L-methionine</name>
        <dbReference type="ChEBI" id="CHEBI:59789"/>
    </ligand>
</feature>
<feature type="binding site" evidence="1">
    <location>
        <position position="123"/>
    </location>
    <ligand>
        <name>S-adenosyl-L-methionine</name>
        <dbReference type="ChEBI" id="CHEBI:59789"/>
    </ligand>
</feature>
<reference key="1">
    <citation type="submission" date="2008-02" db="EMBL/GenBank/DDBJ databases">
        <title>Genome sequence of Ureaplasma parvum serovar 3.</title>
        <authorList>
            <person name="Methe B.A."/>
            <person name="Glass J."/>
            <person name="Waites K."/>
            <person name="Shrivastava S."/>
        </authorList>
    </citation>
    <scope>NUCLEOTIDE SEQUENCE [LARGE SCALE GENOMIC DNA]</scope>
    <source>
        <strain>ATCC 27815 / 27 / NCTC 11736</strain>
    </source>
</reference>